<accession>Q6GFY8</accession>
<organism>
    <name type="scientific">Staphylococcus aureus (strain MRSA252)</name>
    <dbReference type="NCBI Taxonomy" id="282458"/>
    <lineage>
        <taxon>Bacteria</taxon>
        <taxon>Bacillati</taxon>
        <taxon>Bacillota</taxon>
        <taxon>Bacilli</taxon>
        <taxon>Bacillales</taxon>
        <taxon>Staphylococcaceae</taxon>
        <taxon>Staphylococcus</taxon>
    </lineage>
</organism>
<keyword id="KW-0687">Ribonucleoprotein</keyword>
<keyword id="KW-0689">Ribosomal protein</keyword>
<keyword id="KW-0694">RNA-binding</keyword>
<keyword id="KW-0699">rRNA-binding</keyword>
<evidence type="ECO:0000255" key="1">
    <source>
        <dbReference type="HAMAP-Rule" id="MF_01306"/>
    </source>
</evidence>
<evidence type="ECO:0000305" key="2"/>
<gene>
    <name evidence="1" type="primary">rpsD</name>
    <name type="ordered locus">SAR1797</name>
</gene>
<protein>
    <recommendedName>
        <fullName evidence="1">Small ribosomal subunit protein uS4</fullName>
    </recommendedName>
    <alternativeName>
        <fullName evidence="2">30S ribosomal protein S4</fullName>
    </alternativeName>
</protein>
<comment type="function">
    <text evidence="1">One of the primary rRNA binding proteins, it binds directly to 16S rRNA where it nucleates assembly of the body of the 30S subunit.</text>
</comment>
<comment type="function">
    <text evidence="1">With S5 and S12 plays an important role in translational accuracy.</text>
</comment>
<comment type="subunit">
    <text evidence="1">Part of the 30S ribosomal subunit. Contacts protein S5. The interaction surface between S4 and S5 is involved in control of translational fidelity.</text>
</comment>
<comment type="similarity">
    <text evidence="1">Belongs to the universal ribosomal protein uS4 family.</text>
</comment>
<sequence length="200" mass="23029">MARFRGSNWKKSRRLGISLSGTGKELEKRPYAPGQHGPNQRKKLSEYGLQLREKQKLRYLYGMTERQFRNTFDIAGKKFGVHGENFMILLASRLDAVVYSLGLARTRRQARQLVNHGHILVDGKRVDIPSYSVKPSQTISVREKSQKLNVIVESVEINNFVPEYLNFDADSLTGTFVRLPERSELPAEINEQLIVEYYSR</sequence>
<dbReference type="EMBL" id="BX571856">
    <property type="protein sequence ID" value="CAG40788.1"/>
    <property type="molecule type" value="Genomic_DNA"/>
</dbReference>
<dbReference type="RefSeq" id="WP_000090514.1">
    <property type="nucleotide sequence ID" value="NC_002952.2"/>
</dbReference>
<dbReference type="SMR" id="Q6GFY8"/>
<dbReference type="KEGG" id="sar:SAR1797"/>
<dbReference type="HOGENOM" id="CLU_092403_0_1_9"/>
<dbReference type="Proteomes" id="UP000000596">
    <property type="component" value="Chromosome"/>
</dbReference>
<dbReference type="GO" id="GO:0015935">
    <property type="term" value="C:small ribosomal subunit"/>
    <property type="evidence" value="ECO:0007669"/>
    <property type="project" value="InterPro"/>
</dbReference>
<dbReference type="GO" id="GO:0019843">
    <property type="term" value="F:rRNA binding"/>
    <property type="evidence" value="ECO:0007669"/>
    <property type="project" value="UniProtKB-UniRule"/>
</dbReference>
<dbReference type="GO" id="GO:0003735">
    <property type="term" value="F:structural constituent of ribosome"/>
    <property type="evidence" value="ECO:0007669"/>
    <property type="project" value="InterPro"/>
</dbReference>
<dbReference type="GO" id="GO:0042274">
    <property type="term" value="P:ribosomal small subunit biogenesis"/>
    <property type="evidence" value="ECO:0007669"/>
    <property type="project" value="TreeGrafter"/>
</dbReference>
<dbReference type="GO" id="GO:0006412">
    <property type="term" value="P:translation"/>
    <property type="evidence" value="ECO:0007669"/>
    <property type="project" value="UniProtKB-UniRule"/>
</dbReference>
<dbReference type="CDD" id="cd00165">
    <property type="entry name" value="S4"/>
    <property type="match status" value="1"/>
</dbReference>
<dbReference type="FunFam" id="1.10.1050.10:FF:000001">
    <property type="entry name" value="30S ribosomal protein S4"/>
    <property type="match status" value="1"/>
</dbReference>
<dbReference type="FunFam" id="3.10.290.10:FF:000001">
    <property type="entry name" value="30S ribosomal protein S4"/>
    <property type="match status" value="1"/>
</dbReference>
<dbReference type="Gene3D" id="1.10.1050.10">
    <property type="entry name" value="Ribosomal Protein S4 Delta 41, Chain A, domain 1"/>
    <property type="match status" value="1"/>
</dbReference>
<dbReference type="Gene3D" id="3.10.290.10">
    <property type="entry name" value="RNA-binding S4 domain"/>
    <property type="match status" value="1"/>
</dbReference>
<dbReference type="HAMAP" id="MF_01306_B">
    <property type="entry name" value="Ribosomal_uS4_B"/>
    <property type="match status" value="1"/>
</dbReference>
<dbReference type="InterPro" id="IPR022801">
    <property type="entry name" value="Ribosomal_uS4"/>
</dbReference>
<dbReference type="InterPro" id="IPR005709">
    <property type="entry name" value="Ribosomal_uS4_bac-type"/>
</dbReference>
<dbReference type="InterPro" id="IPR018079">
    <property type="entry name" value="Ribosomal_uS4_CS"/>
</dbReference>
<dbReference type="InterPro" id="IPR001912">
    <property type="entry name" value="Ribosomal_uS4_N"/>
</dbReference>
<dbReference type="InterPro" id="IPR002942">
    <property type="entry name" value="S4_RNA-bd"/>
</dbReference>
<dbReference type="InterPro" id="IPR036986">
    <property type="entry name" value="S4_RNA-bd_sf"/>
</dbReference>
<dbReference type="NCBIfam" id="NF003717">
    <property type="entry name" value="PRK05327.1"/>
    <property type="match status" value="1"/>
</dbReference>
<dbReference type="NCBIfam" id="TIGR01017">
    <property type="entry name" value="rpsD_bact"/>
    <property type="match status" value="1"/>
</dbReference>
<dbReference type="PANTHER" id="PTHR11831">
    <property type="entry name" value="30S 40S RIBOSOMAL PROTEIN"/>
    <property type="match status" value="1"/>
</dbReference>
<dbReference type="PANTHER" id="PTHR11831:SF4">
    <property type="entry name" value="SMALL RIBOSOMAL SUBUNIT PROTEIN US4M"/>
    <property type="match status" value="1"/>
</dbReference>
<dbReference type="Pfam" id="PF00163">
    <property type="entry name" value="Ribosomal_S4"/>
    <property type="match status" value="1"/>
</dbReference>
<dbReference type="Pfam" id="PF01479">
    <property type="entry name" value="S4"/>
    <property type="match status" value="1"/>
</dbReference>
<dbReference type="SMART" id="SM01390">
    <property type="entry name" value="Ribosomal_S4"/>
    <property type="match status" value="1"/>
</dbReference>
<dbReference type="SMART" id="SM00363">
    <property type="entry name" value="S4"/>
    <property type="match status" value="1"/>
</dbReference>
<dbReference type="SUPFAM" id="SSF55174">
    <property type="entry name" value="Alpha-L RNA-binding motif"/>
    <property type="match status" value="1"/>
</dbReference>
<dbReference type="PROSITE" id="PS00632">
    <property type="entry name" value="RIBOSOMAL_S4"/>
    <property type="match status" value="1"/>
</dbReference>
<dbReference type="PROSITE" id="PS50889">
    <property type="entry name" value="S4"/>
    <property type="match status" value="1"/>
</dbReference>
<feature type="chain" id="PRO_0000132459" description="Small ribosomal subunit protein uS4">
    <location>
        <begin position="1"/>
        <end position="200"/>
    </location>
</feature>
<feature type="domain" description="S4 RNA-binding" evidence="1">
    <location>
        <begin position="92"/>
        <end position="155"/>
    </location>
</feature>
<name>RS4_STAAR</name>
<proteinExistence type="inferred from homology"/>
<reference key="1">
    <citation type="journal article" date="2004" name="Proc. Natl. Acad. Sci. U.S.A.">
        <title>Complete genomes of two clinical Staphylococcus aureus strains: evidence for the rapid evolution of virulence and drug resistance.</title>
        <authorList>
            <person name="Holden M.T.G."/>
            <person name="Feil E.J."/>
            <person name="Lindsay J.A."/>
            <person name="Peacock S.J."/>
            <person name="Day N.P.J."/>
            <person name="Enright M.C."/>
            <person name="Foster T.J."/>
            <person name="Moore C.E."/>
            <person name="Hurst L."/>
            <person name="Atkin R."/>
            <person name="Barron A."/>
            <person name="Bason N."/>
            <person name="Bentley S.D."/>
            <person name="Chillingworth C."/>
            <person name="Chillingworth T."/>
            <person name="Churcher C."/>
            <person name="Clark L."/>
            <person name="Corton C."/>
            <person name="Cronin A."/>
            <person name="Doggett J."/>
            <person name="Dowd L."/>
            <person name="Feltwell T."/>
            <person name="Hance Z."/>
            <person name="Harris B."/>
            <person name="Hauser H."/>
            <person name="Holroyd S."/>
            <person name="Jagels K."/>
            <person name="James K.D."/>
            <person name="Lennard N."/>
            <person name="Line A."/>
            <person name="Mayes R."/>
            <person name="Moule S."/>
            <person name="Mungall K."/>
            <person name="Ormond D."/>
            <person name="Quail M.A."/>
            <person name="Rabbinowitsch E."/>
            <person name="Rutherford K.M."/>
            <person name="Sanders M."/>
            <person name="Sharp S."/>
            <person name="Simmonds M."/>
            <person name="Stevens K."/>
            <person name="Whitehead S."/>
            <person name="Barrell B.G."/>
            <person name="Spratt B.G."/>
            <person name="Parkhill J."/>
        </authorList>
    </citation>
    <scope>NUCLEOTIDE SEQUENCE [LARGE SCALE GENOMIC DNA]</scope>
    <source>
        <strain>MRSA252</strain>
    </source>
</reference>